<keyword id="KW-0963">Cytoplasm</keyword>
<keyword id="KW-0378">Hydrolase</keyword>
<feature type="chain" id="PRO_1000140096" description="Probable L-ascorbate-6-phosphate lactonase UlaG">
    <location>
        <begin position="1"/>
        <end position="354"/>
    </location>
</feature>
<sequence length="354" mass="40061">MSKVKSITRESWILSTFPEWGSWLNEEIEQEQVAPGTFAMWWLGCTGIWLKSEGGTNVCVDFWCGTGKQSHGNPLMKQGHQMQRMAGVKKLQPNLRTTPFVLDPFAIRQIDAVLATHDHNDHIDVNVAAAVMQNCADDVPFIGPKTCVDLWIGWGVPKERCIVVKPGDVVKVKDIEIHALDAFDRTALITLPADQKAAGVLPDGMDDRAVNYLFKTPGGSLYHSGDSHYSNYYAKHGNEHQIDVALGSYGENPRGITDKMTSADMLRMGEALNAKVVIPFHHDIWSNFQADPQEIRVLWEMKKDRLKYGFKPFIWQVGGKFTWPLDKDNFEYHYPRGFDDCFTIEPDLPFKSFL</sequence>
<organism>
    <name type="scientific">Escherichia coli O17:K52:H18 (strain UMN026 / ExPEC)</name>
    <dbReference type="NCBI Taxonomy" id="585056"/>
    <lineage>
        <taxon>Bacteria</taxon>
        <taxon>Pseudomonadati</taxon>
        <taxon>Pseudomonadota</taxon>
        <taxon>Gammaproteobacteria</taxon>
        <taxon>Enterobacterales</taxon>
        <taxon>Enterobacteriaceae</taxon>
        <taxon>Escherichia</taxon>
    </lineage>
</organism>
<accession>B7NGC6</accession>
<gene>
    <name evidence="1" type="primary">ulaG</name>
    <name type="ordered locus">ECUMN_4725</name>
</gene>
<reference key="1">
    <citation type="journal article" date="2009" name="PLoS Genet.">
        <title>Organised genome dynamics in the Escherichia coli species results in highly diverse adaptive paths.</title>
        <authorList>
            <person name="Touchon M."/>
            <person name="Hoede C."/>
            <person name="Tenaillon O."/>
            <person name="Barbe V."/>
            <person name="Baeriswyl S."/>
            <person name="Bidet P."/>
            <person name="Bingen E."/>
            <person name="Bonacorsi S."/>
            <person name="Bouchier C."/>
            <person name="Bouvet O."/>
            <person name="Calteau A."/>
            <person name="Chiapello H."/>
            <person name="Clermont O."/>
            <person name="Cruveiller S."/>
            <person name="Danchin A."/>
            <person name="Diard M."/>
            <person name="Dossat C."/>
            <person name="Karoui M.E."/>
            <person name="Frapy E."/>
            <person name="Garry L."/>
            <person name="Ghigo J.M."/>
            <person name="Gilles A.M."/>
            <person name="Johnson J."/>
            <person name="Le Bouguenec C."/>
            <person name="Lescat M."/>
            <person name="Mangenot S."/>
            <person name="Martinez-Jehanne V."/>
            <person name="Matic I."/>
            <person name="Nassif X."/>
            <person name="Oztas S."/>
            <person name="Petit M.A."/>
            <person name="Pichon C."/>
            <person name="Rouy Z."/>
            <person name="Ruf C.S."/>
            <person name="Schneider D."/>
            <person name="Tourret J."/>
            <person name="Vacherie B."/>
            <person name="Vallenet D."/>
            <person name="Medigue C."/>
            <person name="Rocha E.P.C."/>
            <person name="Denamur E."/>
        </authorList>
    </citation>
    <scope>NUCLEOTIDE SEQUENCE [LARGE SCALE GENOMIC DNA]</scope>
    <source>
        <strain>UMN026 / ExPEC</strain>
    </source>
</reference>
<proteinExistence type="inferred from homology"/>
<dbReference type="EC" id="3.1.1.-" evidence="1"/>
<dbReference type="EMBL" id="CU928163">
    <property type="protein sequence ID" value="CAR15838.1"/>
    <property type="molecule type" value="Genomic_DNA"/>
</dbReference>
<dbReference type="RefSeq" id="WP_001295191.1">
    <property type="nucleotide sequence ID" value="NC_011751.1"/>
</dbReference>
<dbReference type="RefSeq" id="YP_002415322.1">
    <property type="nucleotide sequence ID" value="NC_011751.1"/>
</dbReference>
<dbReference type="SMR" id="B7NGC6"/>
<dbReference type="STRING" id="585056.ECUMN_4725"/>
<dbReference type="GeneID" id="93777632"/>
<dbReference type="KEGG" id="eum:ECUMN_4725"/>
<dbReference type="PATRIC" id="fig|585056.7.peg.4888"/>
<dbReference type="HOGENOM" id="CLU_074775_0_0_6"/>
<dbReference type="UniPathway" id="UPA00263">
    <property type="reaction ID" value="UER00377"/>
</dbReference>
<dbReference type="Proteomes" id="UP000007097">
    <property type="component" value="Chromosome"/>
</dbReference>
<dbReference type="GO" id="GO:0005737">
    <property type="term" value="C:cytoplasm"/>
    <property type="evidence" value="ECO:0007669"/>
    <property type="project" value="UniProtKB-SubCell"/>
</dbReference>
<dbReference type="GO" id="GO:0035460">
    <property type="term" value="F:L-ascorbate 6-phosphate lactonase activity"/>
    <property type="evidence" value="ECO:0007669"/>
    <property type="project" value="InterPro"/>
</dbReference>
<dbReference type="GO" id="GO:0030145">
    <property type="term" value="F:manganese ion binding"/>
    <property type="evidence" value="ECO:0007669"/>
    <property type="project" value="InterPro"/>
</dbReference>
<dbReference type="GO" id="GO:0019854">
    <property type="term" value="P:L-ascorbic acid catabolic process"/>
    <property type="evidence" value="ECO:0007669"/>
    <property type="project" value="UniProtKB-UniRule"/>
</dbReference>
<dbReference type="CDD" id="cd16284">
    <property type="entry name" value="UlaG-like_MBL-fold"/>
    <property type="match status" value="1"/>
</dbReference>
<dbReference type="FunFam" id="3.60.15.10:FF:000004">
    <property type="entry name" value="Probable L-ascorbate-6-phosphate lactonase UlaG"/>
    <property type="match status" value="1"/>
</dbReference>
<dbReference type="Gene3D" id="3.60.15.10">
    <property type="entry name" value="Ribonuclease Z/Hydroxyacylglutathione hydrolase-like"/>
    <property type="match status" value="1"/>
</dbReference>
<dbReference type="HAMAP" id="MF_01266">
    <property type="entry name" value="UlaG"/>
    <property type="match status" value="1"/>
</dbReference>
<dbReference type="InterPro" id="IPR023951">
    <property type="entry name" value="L-ascorbate_6P_UlaG"/>
</dbReference>
<dbReference type="InterPro" id="IPR001279">
    <property type="entry name" value="Metallo-B-lactamas"/>
</dbReference>
<dbReference type="InterPro" id="IPR036866">
    <property type="entry name" value="RibonucZ/Hydroxyglut_hydro"/>
</dbReference>
<dbReference type="InterPro" id="IPR048021">
    <property type="entry name" value="UlaG-like_MBL-fold"/>
</dbReference>
<dbReference type="InterPro" id="IPR050114">
    <property type="entry name" value="UPF0173_UPF0282_UlaG_hydrolase"/>
</dbReference>
<dbReference type="NCBIfam" id="NF008688">
    <property type="entry name" value="PRK11709.1"/>
    <property type="match status" value="1"/>
</dbReference>
<dbReference type="PANTHER" id="PTHR43546:SF9">
    <property type="entry name" value="L-ASCORBATE-6-PHOSPHATE LACTONASE ULAG-RELATED"/>
    <property type="match status" value="1"/>
</dbReference>
<dbReference type="PANTHER" id="PTHR43546">
    <property type="entry name" value="UPF0173 METAL-DEPENDENT HYDROLASE MJ1163-RELATED"/>
    <property type="match status" value="1"/>
</dbReference>
<dbReference type="Pfam" id="PF12706">
    <property type="entry name" value="Lactamase_B_2"/>
    <property type="match status" value="1"/>
</dbReference>
<dbReference type="SUPFAM" id="SSF56281">
    <property type="entry name" value="Metallo-hydrolase/oxidoreductase"/>
    <property type="match status" value="1"/>
</dbReference>
<name>ULAG_ECOLU</name>
<evidence type="ECO:0000255" key="1">
    <source>
        <dbReference type="HAMAP-Rule" id="MF_01266"/>
    </source>
</evidence>
<protein>
    <recommendedName>
        <fullName evidence="1">Probable L-ascorbate-6-phosphate lactonase UlaG</fullName>
        <ecNumber evidence="1">3.1.1.-</ecNumber>
    </recommendedName>
    <alternativeName>
        <fullName evidence="1">L-ascorbate utilization protein G</fullName>
    </alternativeName>
</protein>
<comment type="function">
    <text evidence="1">Probably catalyzes the hydrolysis of L-ascorbate-6-P into 3-keto-L-gulonate-6-P. Is essential for L-ascorbate utilization under anaerobic conditions.</text>
</comment>
<comment type="catalytic activity">
    <reaction evidence="1">
        <text>L-ascorbate 6-phosphate + H2O = 3-dehydro-L-gulonate 6-phosphate</text>
        <dbReference type="Rhea" id="RHEA:28803"/>
        <dbReference type="ChEBI" id="CHEBI:15377"/>
        <dbReference type="ChEBI" id="CHEBI:58774"/>
        <dbReference type="ChEBI" id="CHEBI:61698"/>
    </reaction>
</comment>
<comment type="cofactor">
    <cofactor evidence="1">
        <name>a divalent metal cation</name>
        <dbReference type="ChEBI" id="CHEBI:60240"/>
    </cofactor>
</comment>
<comment type="pathway">
    <text evidence="1">Cofactor degradation; L-ascorbate degradation; D-xylulose 5-phosphate from L-ascorbate: step 1/4.</text>
</comment>
<comment type="subcellular location">
    <subcellularLocation>
        <location evidence="1">Cytoplasm</location>
    </subcellularLocation>
</comment>
<comment type="induction">
    <text evidence="1">Induced by L-ascorbate. Repressed by UlaR.</text>
</comment>
<comment type="similarity">
    <text evidence="1">Belongs to the UlaG family.</text>
</comment>